<comment type="function">
    <text evidence="1">Involved in teeth and skeletal development. Has an essential role in the biosynthesis and trafficking of glycosaminoglycans and glycoproteins to produce a proper functioning extracellular matrix. Required for extracellular matrix mineralization. Also involved in the regulation of cellular calcium homeostasis. Does not show transport activity towards bile acids or steroid sulfates.</text>
</comment>
<comment type="subcellular location">
    <subcellularLocation>
        <location evidence="1">Cell membrane</location>
        <topology evidence="1">Multi-pass membrane protein</topology>
    </subcellularLocation>
    <subcellularLocation>
        <location evidence="1">Endoplasmic reticulum membrane</location>
        <topology evidence="1">Multi-pass membrane protein</topology>
    </subcellularLocation>
    <subcellularLocation>
        <location evidence="1">Golgi apparatus membrane</location>
    </subcellularLocation>
</comment>
<comment type="similarity">
    <text evidence="3">Belongs to the bile acid:sodium symporter (BASS) (TC 2.A.28) family.</text>
</comment>
<evidence type="ECO:0000250" key="1">
    <source>
        <dbReference type="UniProtKB" id="Q0GE19"/>
    </source>
</evidence>
<evidence type="ECO:0000255" key="2"/>
<evidence type="ECO:0000305" key="3"/>
<proteinExistence type="evidence at transcript level"/>
<name>NTP7B_XENLA</name>
<organism>
    <name type="scientific">Xenopus laevis</name>
    <name type="common">African clawed frog</name>
    <dbReference type="NCBI Taxonomy" id="8355"/>
    <lineage>
        <taxon>Eukaryota</taxon>
        <taxon>Metazoa</taxon>
        <taxon>Chordata</taxon>
        <taxon>Craniata</taxon>
        <taxon>Vertebrata</taxon>
        <taxon>Euteleostomi</taxon>
        <taxon>Amphibia</taxon>
        <taxon>Batrachia</taxon>
        <taxon>Anura</taxon>
        <taxon>Pipoidea</taxon>
        <taxon>Pipidae</taxon>
        <taxon>Xenopodinae</taxon>
        <taxon>Xenopus</taxon>
        <taxon>Xenopus</taxon>
    </lineage>
</organism>
<keyword id="KW-1003">Cell membrane</keyword>
<keyword id="KW-0256">Endoplasmic reticulum</keyword>
<keyword id="KW-0333">Golgi apparatus</keyword>
<keyword id="KW-0406">Ion transport</keyword>
<keyword id="KW-0472">Membrane</keyword>
<keyword id="KW-1185">Reference proteome</keyword>
<keyword id="KW-0915">Sodium</keyword>
<keyword id="KW-0739">Sodium transport</keyword>
<keyword id="KW-0769">Symport</keyword>
<keyword id="KW-0812">Transmembrane</keyword>
<keyword id="KW-1133">Transmembrane helix</keyword>
<keyword id="KW-0813">Transport</keyword>
<reference key="1">
    <citation type="journal article" date="2007" name="Eur. J. Cell Biol.">
        <title>Molecular and phylogenetic characterization of a novel putative membrane transporter (SLC10A7), conserved in vertebrates and bacteria.</title>
        <authorList>
            <person name="Godoy J.R."/>
            <person name="Fernandes C."/>
            <person name="Doering B."/>
            <person name="Beuerlein K."/>
            <person name="Petzinger E."/>
            <person name="Geyer J."/>
        </authorList>
    </citation>
    <scope>NUCLEOTIDE SEQUENCE [MRNA]</scope>
    <source>
        <tissue>Small intestine</tissue>
    </source>
</reference>
<reference key="2">
    <citation type="submission" date="2005-04" db="EMBL/GenBank/DDBJ databases">
        <authorList>
            <consortium name="NIH - Xenopus Gene Collection (XGC) project"/>
        </authorList>
    </citation>
    <scope>NUCLEOTIDE SEQUENCE [LARGE SCALE MRNA]</scope>
    <source>
        <tissue>Egg</tissue>
    </source>
</reference>
<accession>Q52KD1</accession>
<protein>
    <recommendedName>
        <fullName>Sodium/bile acid cotransporter 7-B</fullName>
    </recommendedName>
    <alternativeName>
        <fullName>Na(+)/bile acid cotransporter 7-B</fullName>
    </alternativeName>
    <alternativeName>
        <fullName>Solute carrier family 10 member 7-B</fullName>
        <shortName>xP7</shortName>
    </alternativeName>
</protein>
<gene>
    <name type="primary">slc10a7-b</name>
</gene>
<sequence>MGLLERLRKEWFIIGIILVIVAAKLEPTIGEKGGPLKPEITITYIAVSAIFFNSGLSLKTEELTNALMHVKLHLFVQLFTLVFFPTAIWIFLQVLSLTPINEWLLKGLQTVSCMPPPVSSAVILTKAVGGNEAAAIFNSAFGSFLGIVVTPLLLLLFLGSSSSVPFTSIFSQLFMTVVVPLIIGQIVRRYIKDWLERKKPPFGAISSCVLLMIIYTTFCDTFSNPNIDLDTFSLVVIVFIIFFIQLAFMLLTFLFSTSKNSGFTPADTVAIVFCSTHKSLTLGIPMLKIVFAGYEHLSLISVPLLIYHPAQILLGSVLVPTIKSWMLSRRKALKLTRQPKIPL</sequence>
<dbReference type="EMBL" id="DQ148474">
    <property type="protein sequence ID" value="AAZ76553.1"/>
    <property type="molecule type" value="mRNA"/>
</dbReference>
<dbReference type="EMBL" id="BC094406">
    <property type="protein sequence ID" value="AAH94406.1"/>
    <property type="molecule type" value="mRNA"/>
</dbReference>
<dbReference type="RefSeq" id="NP_001165665.1">
    <property type="nucleotide sequence ID" value="NM_001172194.1"/>
</dbReference>
<dbReference type="SMR" id="Q52KD1"/>
<dbReference type="DNASU" id="100337583"/>
<dbReference type="GeneID" id="100337583"/>
<dbReference type="KEGG" id="xla:100337583"/>
<dbReference type="AGR" id="Xenbase:XB-GENE-6464334"/>
<dbReference type="CTD" id="100337583"/>
<dbReference type="Xenbase" id="XB-GENE-6464334">
    <property type="gene designation" value="slc10a7.L"/>
</dbReference>
<dbReference type="OrthoDB" id="188035at2759"/>
<dbReference type="Proteomes" id="UP000186698">
    <property type="component" value="Chromosome 1L"/>
</dbReference>
<dbReference type="Bgee" id="100337583">
    <property type="expression patterns" value="Expressed in egg cell and 19 other cell types or tissues"/>
</dbReference>
<dbReference type="GO" id="GO:0005789">
    <property type="term" value="C:endoplasmic reticulum membrane"/>
    <property type="evidence" value="ECO:0007669"/>
    <property type="project" value="UniProtKB-SubCell"/>
</dbReference>
<dbReference type="GO" id="GO:0000139">
    <property type="term" value="C:Golgi membrane"/>
    <property type="evidence" value="ECO:0007669"/>
    <property type="project" value="UniProtKB-SubCell"/>
</dbReference>
<dbReference type="GO" id="GO:0005886">
    <property type="term" value="C:plasma membrane"/>
    <property type="evidence" value="ECO:0000318"/>
    <property type="project" value="GO_Central"/>
</dbReference>
<dbReference type="GO" id="GO:0015293">
    <property type="term" value="F:symporter activity"/>
    <property type="evidence" value="ECO:0007669"/>
    <property type="project" value="UniProtKB-KW"/>
</dbReference>
<dbReference type="GO" id="GO:0006814">
    <property type="term" value="P:sodium ion transport"/>
    <property type="evidence" value="ECO:0007669"/>
    <property type="project" value="UniProtKB-KW"/>
</dbReference>
<dbReference type="FunFam" id="1.20.1530.20:FF:000008">
    <property type="entry name" value="Sodium/bile acid cotransporter"/>
    <property type="match status" value="1"/>
</dbReference>
<dbReference type="Gene3D" id="1.20.1530.20">
    <property type="match status" value="1"/>
</dbReference>
<dbReference type="InterPro" id="IPR038770">
    <property type="entry name" value="Na+/solute_symporter_sf"/>
</dbReference>
<dbReference type="InterPro" id="IPR016833">
    <property type="entry name" value="Put_Na-Bile_cotransptr"/>
</dbReference>
<dbReference type="PANTHER" id="PTHR18640:SF5">
    <property type="entry name" value="SODIUM_BILE ACID COTRANSPORTER 7"/>
    <property type="match status" value="1"/>
</dbReference>
<dbReference type="PANTHER" id="PTHR18640">
    <property type="entry name" value="SOLUTE CARRIER FAMILY 10 MEMBER 7"/>
    <property type="match status" value="1"/>
</dbReference>
<dbReference type="Pfam" id="PF13593">
    <property type="entry name" value="SBF_like"/>
    <property type="match status" value="1"/>
</dbReference>
<dbReference type="PIRSF" id="PIRSF026166">
    <property type="entry name" value="UCP026166"/>
    <property type="match status" value="1"/>
</dbReference>
<feature type="chain" id="PRO_0000278256" description="Sodium/bile acid cotransporter 7-B">
    <location>
        <begin position="1"/>
        <end position="343"/>
    </location>
</feature>
<feature type="topological domain" description="Cytoplasmic" evidence="1">
    <location>
        <begin position="1"/>
        <end position="9"/>
    </location>
</feature>
<feature type="transmembrane region" description="Helical" evidence="2">
    <location>
        <begin position="10"/>
        <end position="30"/>
    </location>
</feature>
<feature type="topological domain" description="Extracellular" evidence="1">
    <location>
        <begin position="31"/>
        <end position="37"/>
    </location>
</feature>
<feature type="transmembrane region" description="Helical" evidence="2">
    <location>
        <begin position="38"/>
        <end position="58"/>
    </location>
</feature>
<feature type="topological domain" description="Cytoplasmic" evidence="1">
    <location>
        <begin position="59"/>
        <end position="71"/>
    </location>
</feature>
<feature type="transmembrane region" description="Helical" evidence="2">
    <location>
        <begin position="72"/>
        <end position="92"/>
    </location>
</feature>
<feature type="topological domain" description="Extracellular" evidence="1">
    <location>
        <begin position="93"/>
        <end position="116"/>
    </location>
</feature>
<feature type="transmembrane region" description="Helical" evidence="2">
    <location>
        <begin position="117"/>
        <end position="137"/>
    </location>
</feature>
<feature type="topological domain" description="Cytoplasmic" evidence="1">
    <location>
        <position position="138"/>
    </location>
</feature>
<feature type="transmembrane region" description="Helical" evidence="2">
    <location>
        <begin position="139"/>
        <end position="159"/>
    </location>
</feature>
<feature type="topological domain" description="Extracellular" evidence="1">
    <location>
        <begin position="160"/>
        <end position="163"/>
    </location>
</feature>
<feature type="transmembrane region" description="Helical" evidence="2">
    <location>
        <begin position="164"/>
        <end position="184"/>
    </location>
</feature>
<feature type="topological domain" description="Cytoplasmic" evidence="1">
    <location>
        <begin position="185"/>
        <end position="201"/>
    </location>
</feature>
<feature type="transmembrane region" description="Helical" evidence="2">
    <location>
        <begin position="202"/>
        <end position="222"/>
    </location>
</feature>
<feature type="topological domain" description="Extracellular" evidence="1">
    <location>
        <begin position="223"/>
        <end position="234"/>
    </location>
</feature>
<feature type="transmembrane region" description="Helical" evidence="2">
    <location>
        <begin position="235"/>
        <end position="255"/>
    </location>
</feature>
<feature type="topological domain" description="Cytoplasmic" evidence="1">
    <location>
        <begin position="256"/>
        <end position="270"/>
    </location>
</feature>
<feature type="transmembrane region" description="Helical" evidence="2">
    <location>
        <begin position="271"/>
        <end position="291"/>
    </location>
</feature>
<feature type="topological domain" description="Extracellular" evidence="1">
    <location>
        <begin position="292"/>
        <end position="298"/>
    </location>
</feature>
<feature type="transmembrane region" description="Helical" evidence="2">
    <location>
        <begin position="299"/>
        <end position="319"/>
    </location>
</feature>
<feature type="topological domain" description="Cytoplasmic" evidence="1">
    <location>
        <begin position="320"/>
        <end position="343"/>
    </location>
</feature>